<protein>
    <recommendedName>
        <fullName evidence="1">D-alanyl carrier protein</fullName>
        <shortName evidence="1">DCP</shortName>
    </recommendedName>
    <alternativeName>
        <fullName evidence="1">D-alanine--poly(phosphoribitol) ligase subunit 2</fullName>
    </alternativeName>
</protein>
<gene>
    <name evidence="1" type="primary">dltC</name>
    <name type="ordered locus">LEUM_1815</name>
</gene>
<proteinExistence type="inferred from homology"/>
<reference key="1">
    <citation type="journal article" date="2006" name="Proc. Natl. Acad. Sci. U.S.A.">
        <title>Comparative genomics of the lactic acid bacteria.</title>
        <authorList>
            <person name="Makarova K.S."/>
            <person name="Slesarev A."/>
            <person name="Wolf Y.I."/>
            <person name="Sorokin A."/>
            <person name="Mirkin B."/>
            <person name="Koonin E.V."/>
            <person name="Pavlov A."/>
            <person name="Pavlova N."/>
            <person name="Karamychev V."/>
            <person name="Polouchine N."/>
            <person name="Shakhova V."/>
            <person name="Grigoriev I."/>
            <person name="Lou Y."/>
            <person name="Rohksar D."/>
            <person name="Lucas S."/>
            <person name="Huang K."/>
            <person name="Goodstein D.M."/>
            <person name="Hawkins T."/>
            <person name="Plengvidhya V."/>
            <person name="Welker D."/>
            <person name="Hughes J."/>
            <person name="Goh Y."/>
            <person name="Benson A."/>
            <person name="Baldwin K."/>
            <person name="Lee J.-H."/>
            <person name="Diaz-Muniz I."/>
            <person name="Dosti B."/>
            <person name="Smeianov V."/>
            <person name="Wechter W."/>
            <person name="Barabote R."/>
            <person name="Lorca G."/>
            <person name="Altermann E."/>
            <person name="Barrangou R."/>
            <person name="Ganesan B."/>
            <person name="Xie Y."/>
            <person name="Rawsthorne H."/>
            <person name="Tamir D."/>
            <person name="Parker C."/>
            <person name="Breidt F."/>
            <person name="Broadbent J.R."/>
            <person name="Hutkins R."/>
            <person name="O'Sullivan D."/>
            <person name="Steele J."/>
            <person name="Unlu G."/>
            <person name="Saier M.H. Jr."/>
            <person name="Klaenhammer T."/>
            <person name="Richardson P."/>
            <person name="Kozyavkin S."/>
            <person name="Weimer B.C."/>
            <person name="Mills D.A."/>
        </authorList>
    </citation>
    <scope>NUCLEOTIDE SEQUENCE [LARGE SCALE GENOMIC DNA]</scope>
    <source>
        <strain>ATCC 8293 / DSM 20343 / BCRC 11652 / CCM 1803 / JCM 6124 / NCDO 523 / NBRC 100496 / NCIMB 8023 / NCTC 12954 / NRRL B-1118 / 37Y</strain>
    </source>
</reference>
<dbReference type="EMBL" id="CP000414">
    <property type="protein sequence ID" value="ABJ62902.1"/>
    <property type="molecule type" value="Genomic_DNA"/>
</dbReference>
<dbReference type="RefSeq" id="WP_010292689.1">
    <property type="nucleotide sequence ID" value="NC_008531.1"/>
</dbReference>
<dbReference type="SMR" id="Q03V70"/>
<dbReference type="EnsemblBacteria" id="ABJ62902">
    <property type="protein sequence ID" value="ABJ62902"/>
    <property type="gene ID" value="LEUM_1815"/>
</dbReference>
<dbReference type="GeneID" id="29577107"/>
<dbReference type="KEGG" id="lme:LEUM_1815"/>
<dbReference type="eggNOG" id="COG0236">
    <property type="taxonomic scope" value="Bacteria"/>
</dbReference>
<dbReference type="HOGENOM" id="CLU_108696_19_0_9"/>
<dbReference type="UniPathway" id="UPA00556"/>
<dbReference type="Proteomes" id="UP000000362">
    <property type="component" value="Chromosome"/>
</dbReference>
<dbReference type="GO" id="GO:0005737">
    <property type="term" value="C:cytoplasm"/>
    <property type="evidence" value="ECO:0007669"/>
    <property type="project" value="UniProtKB-SubCell"/>
</dbReference>
<dbReference type="GO" id="GO:0036370">
    <property type="term" value="F:D-alanyl carrier activity"/>
    <property type="evidence" value="ECO:0007669"/>
    <property type="project" value="UniProtKB-UniRule"/>
</dbReference>
<dbReference type="GO" id="GO:0071555">
    <property type="term" value="P:cell wall organization"/>
    <property type="evidence" value="ECO:0007669"/>
    <property type="project" value="UniProtKB-KW"/>
</dbReference>
<dbReference type="GO" id="GO:0070395">
    <property type="term" value="P:lipoteichoic acid biosynthetic process"/>
    <property type="evidence" value="ECO:0007669"/>
    <property type="project" value="UniProtKB-UniRule"/>
</dbReference>
<dbReference type="Gene3D" id="1.10.1200.10">
    <property type="entry name" value="ACP-like"/>
    <property type="match status" value="1"/>
</dbReference>
<dbReference type="HAMAP" id="MF_00565">
    <property type="entry name" value="DltC"/>
    <property type="match status" value="1"/>
</dbReference>
<dbReference type="InterPro" id="IPR036736">
    <property type="entry name" value="ACP-like_sf"/>
</dbReference>
<dbReference type="InterPro" id="IPR003230">
    <property type="entry name" value="DltC"/>
</dbReference>
<dbReference type="InterPro" id="IPR009081">
    <property type="entry name" value="PP-bd_ACP"/>
</dbReference>
<dbReference type="NCBIfam" id="TIGR01688">
    <property type="entry name" value="dltC"/>
    <property type="match status" value="1"/>
</dbReference>
<dbReference type="NCBIfam" id="NF003464">
    <property type="entry name" value="PRK05087.1"/>
    <property type="match status" value="1"/>
</dbReference>
<dbReference type="Pfam" id="PF00550">
    <property type="entry name" value="PP-binding"/>
    <property type="match status" value="1"/>
</dbReference>
<dbReference type="SUPFAM" id="SSF47336">
    <property type="entry name" value="ACP-like"/>
    <property type="match status" value="1"/>
</dbReference>
<dbReference type="PROSITE" id="PS50075">
    <property type="entry name" value="CARRIER"/>
    <property type="match status" value="1"/>
</dbReference>
<comment type="function">
    <text evidence="1">Carrier protein involved in the D-alanylation of lipoteichoic acid (LTA). The loading of thioester-linked D-alanine onto DltC is catalyzed by D-alanine--D-alanyl carrier protein ligase DltA. The DltC-carried D-alanyl group is further transferred to cell membrane phosphatidylglycerol (PG) by forming an ester bond, probably catalyzed by DltD. D-alanylation of LTA plays an important role in modulating the properties of the cell wall in Gram-positive bacteria, influencing the net charge of the cell wall.</text>
</comment>
<comment type="pathway">
    <text evidence="1">Cell wall biogenesis; lipoteichoic acid biosynthesis.</text>
</comment>
<comment type="subcellular location">
    <subcellularLocation>
        <location evidence="1">Cytoplasm</location>
    </subcellularLocation>
</comment>
<comment type="PTM">
    <text evidence="1">4'-phosphopantetheine is transferred from CoA to a specific serine of apo-DCP.</text>
</comment>
<comment type="similarity">
    <text evidence="1">Belongs to the DltC family.</text>
</comment>
<keyword id="KW-0961">Cell wall biogenesis/degradation</keyword>
<keyword id="KW-0963">Cytoplasm</keyword>
<keyword id="KW-0596">Phosphopantetheine</keyword>
<keyword id="KW-0597">Phosphoprotein</keyword>
<keyword id="KW-1185">Reference proteome</keyword>
<accession>Q03V70</accession>
<name>DLTC_LEUMM</name>
<feature type="chain" id="PRO_1000024921" description="D-alanyl carrier protein">
    <location>
        <begin position="1"/>
        <end position="78"/>
    </location>
</feature>
<feature type="domain" description="Carrier" evidence="1">
    <location>
        <begin position="1"/>
        <end position="77"/>
    </location>
</feature>
<feature type="modified residue" description="O-(pantetheine 4'-phosphoryl)serine" evidence="1">
    <location>
        <position position="35"/>
    </location>
</feature>
<evidence type="ECO:0000255" key="1">
    <source>
        <dbReference type="HAMAP-Rule" id="MF_00565"/>
    </source>
</evidence>
<organism>
    <name type="scientific">Leuconostoc mesenteroides subsp. mesenteroides (strain ATCC 8293 / DSM 20343 / BCRC 11652 / CCM 1803 / JCM 6124 / NCDO 523 / NBRC 100496 / NCIMB 8023 / NCTC 12954 / NRRL B-1118 / 37Y)</name>
    <dbReference type="NCBI Taxonomy" id="203120"/>
    <lineage>
        <taxon>Bacteria</taxon>
        <taxon>Bacillati</taxon>
        <taxon>Bacillota</taxon>
        <taxon>Bacilli</taxon>
        <taxon>Lactobacillales</taxon>
        <taxon>Lactobacillaceae</taxon>
        <taxon>Leuconostoc</taxon>
    </lineage>
</organism>
<sequence length="78" mass="8845">MDLKEQIVEILNTIIGEDISDQMDDDFFENGLLDSMATVELLLDLESKFNIQAPVSEFNRDEWNTPNKVVAKVESLIG</sequence>